<gene>
    <name evidence="1" type="primary">btsS</name>
    <name type="synonym">yehU</name>
    <name type="ordered locus">SF2198</name>
    <name type="ordered locus">S2325</name>
</gene>
<protein>
    <recommendedName>
        <fullName evidence="1">Sensor histidine kinase BtsS</fullName>
        <ecNumber evidence="1">2.7.13.3</ecNumber>
    </recommendedName>
</protein>
<organism>
    <name type="scientific">Shigella flexneri</name>
    <dbReference type="NCBI Taxonomy" id="623"/>
    <lineage>
        <taxon>Bacteria</taxon>
        <taxon>Pseudomonadati</taxon>
        <taxon>Pseudomonadota</taxon>
        <taxon>Gammaproteobacteria</taxon>
        <taxon>Enterobacterales</taxon>
        <taxon>Enterobacteriaceae</taxon>
        <taxon>Shigella</taxon>
    </lineage>
</organism>
<feature type="chain" id="PRO_0000042844" description="Sensor histidine kinase BtsS">
    <location>
        <begin position="1"/>
        <end position="561"/>
    </location>
</feature>
<feature type="topological domain" description="Cytoplasmic" evidence="3">
    <location>
        <begin position="1"/>
        <end position="3"/>
    </location>
</feature>
<feature type="transmembrane region" description="Helical" evidence="2">
    <location>
        <begin position="4"/>
        <end position="24"/>
    </location>
</feature>
<feature type="topological domain" description="Periplasmic" evidence="3">
    <location>
        <begin position="25"/>
        <end position="43"/>
    </location>
</feature>
<feature type="transmembrane region" description="Helical" evidence="2">
    <location>
        <begin position="44"/>
        <end position="64"/>
    </location>
</feature>
<feature type="topological domain" description="Cytoplasmic" evidence="3">
    <location>
        <begin position="65"/>
        <end position="72"/>
    </location>
</feature>
<feature type="transmembrane region" description="Helical" evidence="2">
    <location>
        <begin position="73"/>
        <end position="93"/>
    </location>
</feature>
<feature type="topological domain" description="Periplasmic" evidence="3">
    <location>
        <begin position="94"/>
        <end position="108"/>
    </location>
</feature>
<feature type="transmembrane region" description="Helical" evidence="2">
    <location>
        <begin position="109"/>
        <end position="129"/>
    </location>
</feature>
<feature type="topological domain" description="Cytoplasmic" evidence="3">
    <location>
        <begin position="130"/>
        <end position="140"/>
    </location>
</feature>
<feature type="transmembrane region" description="Helical" evidence="2">
    <location>
        <begin position="141"/>
        <end position="161"/>
    </location>
</feature>
<feature type="topological domain" description="Periplasmic" evidence="3">
    <location>
        <begin position="162"/>
        <end position="170"/>
    </location>
</feature>
<feature type="transmembrane region" description="Helical" evidence="2">
    <location>
        <begin position="171"/>
        <end position="191"/>
    </location>
</feature>
<feature type="topological domain" description="Cytoplasmic" evidence="1">
    <location>
        <begin position="192"/>
        <end position="561"/>
    </location>
</feature>
<feature type="domain" description="Histidine kinase">
    <location>
        <begin position="354"/>
        <end position="559"/>
    </location>
</feature>
<reference key="1">
    <citation type="journal article" date="2002" name="Nucleic Acids Res.">
        <title>Genome sequence of Shigella flexneri 2a: insights into pathogenicity through comparison with genomes of Escherichia coli K12 and O157.</title>
        <authorList>
            <person name="Jin Q."/>
            <person name="Yuan Z."/>
            <person name="Xu J."/>
            <person name="Wang Y."/>
            <person name="Shen Y."/>
            <person name="Lu W."/>
            <person name="Wang J."/>
            <person name="Liu H."/>
            <person name="Yang J."/>
            <person name="Yang F."/>
            <person name="Zhang X."/>
            <person name="Zhang J."/>
            <person name="Yang G."/>
            <person name="Wu H."/>
            <person name="Qu D."/>
            <person name="Dong J."/>
            <person name="Sun L."/>
            <person name="Xue Y."/>
            <person name="Zhao A."/>
            <person name="Gao Y."/>
            <person name="Zhu J."/>
            <person name="Kan B."/>
            <person name="Ding K."/>
            <person name="Chen S."/>
            <person name="Cheng H."/>
            <person name="Yao Z."/>
            <person name="He B."/>
            <person name="Chen R."/>
            <person name="Ma D."/>
            <person name="Qiang B."/>
            <person name="Wen Y."/>
            <person name="Hou Y."/>
            <person name="Yu J."/>
        </authorList>
    </citation>
    <scope>NUCLEOTIDE SEQUENCE [LARGE SCALE GENOMIC DNA]</scope>
    <source>
        <strain>301 / Serotype 2a</strain>
    </source>
</reference>
<reference key="2">
    <citation type="journal article" date="2003" name="Infect. Immun.">
        <title>Complete genome sequence and comparative genomics of Shigella flexneri serotype 2a strain 2457T.</title>
        <authorList>
            <person name="Wei J."/>
            <person name="Goldberg M.B."/>
            <person name="Burland V."/>
            <person name="Venkatesan M.M."/>
            <person name="Deng W."/>
            <person name="Fournier G."/>
            <person name="Mayhew G.F."/>
            <person name="Plunkett G. III"/>
            <person name="Rose D.J."/>
            <person name="Darling A."/>
            <person name="Mau B."/>
            <person name="Perna N.T."/>
            <person name="Payne S.M."/>
            <person name="Runyen-Janecky L.J."/>
            <person name="Zhou S."/>
            <person name="Schwartz D.C."/>
            <person name="Blattner F.R."/>
        </authorList>
    </citation>
    <scope>NUCLEOTIDE SEQUENCE [LARGE SCALE GENOMIC DNA]</scope>
    <source>
        <strain>ATCC 700930 / 2457T / Serotype 2a</strain>
    </source>
</reference>
<keyword id="KW-0067">ATP-binding</keyword>
<keyword id="KW-0997">Cell inner membrane</keyword>
<keyword id="KW-1003">Cell membrane</keyword>
<keyword id="KW-0418">Kinase</keyword>
<keyword id="KW-0472">Membrane</keyword>
<keyword id="KW-0547">Nucleotide-binding</keyword>
<keyword id="KW-0597">Phosphoprotein</keyword>
<keyword id="KW-1185">Reference proteome</keyword>
<keyword id="KW-0808">Transferase</keyword>
<keyword id="KW-0812">Transmembrane</keyword>
<keyword id="KW-1133">Transmembrane helix</keyword>
<keyword id="KW-0902">Two-component regulatory system</keyword>
<evidence type="ECO:0000250" key="1">
    <source>
        <dbReference type="UniProtKB" id="P0AD14"/>
    </source>
</evidence>
<evidence type="ECO:0000255" key="2"/>
<evidence type="ECO:0000305" key="3"/>
<comment type="function">
    <text evidence="1">Member of the two-component regulatory system BtsS/BtsR. BtsS is a high-affinity receptor for extracellular pyruvate that activates BtsR by phosphorylation.</text>
</comment>
<comment type="catalytic activity">
    <reaction evidence="1">
        <text>ATP + protein L-histidine = ADP + protein N-phospho-L-histidine.</text>
        <dbReference type="EC" id="2.7.13.3"/>
    </reaction>
</comment>
<comment type="subcellular location">
    <subcellularLocation>
        <location evidence="1">Cell inner membrane</location>
        <topology evidence="2">Multi-pass membrane protein</topology>
    </subcellularLocation>
</comment>
<comment type="PTM">
    <text evidence="1">Autophosphorylated.</text>
</comment>
<dbReference type="EC" id="2.7.13.3" evidence="1"/>
<dbReference type="EMBL" id="AE005674">
    <property type="protein sequence ID" value="AAN43724.2"/>
    <property type="molecule type" value="Genomic_DNA"/>
</dbReference>
<dbReference type="EMBL" id="AE014073">
    <property type="protein sequence ID" value="AAP17542.1"/>
    <property type="molecule type" value="Genomic_DNA"/>
</dbReference>
<dbReference type="RefSeq" id="NP_708017.2">
    <property type="nucleotide sequence ID" value="NC_004337.2"/>
</dbReference>
<dbReference type="RefSeq" id="WP_001295431.1">
    <property type="nucleotide sequence ID" value="NZ_WPGW01000249.1"/>
</dbReference>
<dbReference type="SMR" id="P0AD16"/>
<dbReference type="STRING" id="198214.SF2198"/>
<dbReference type="PaxDb" id="198214-SF2198"/>
<dbReference type="GeneID" id="1027301"/>
<dbReference type="GeneID" id="75206372"/>
<dbReference type="KEGG" id="sfl:SF2198"/>
<dbReference type="KEGG" id="sfx:S2325"/>
<dbReference type="PATRIC" id="fig|198214.7.peg.2626"/>
<dbReference type="HOGENOM" id="CLU_020473_3_3_6"/>
<dbReference type="Proteomes" id="UP000001006">
    <property type="component" value="Chromosome"/>
</dbReference>
<dbReference type="Proteomes" id="UP000002673">
    <property type="component" value="Chromosome"/>
</dbReference>
<dbReference type="GO" id="GO:0005886">
    <property type="term" value="C:plasma membrane"/>
    <property type="evidence" value="ECO:0007669"/>
    <property type="project" value="UniProtKB-SubCell"/>
</dbReference>
<dbReference type="GO" id="GO:0005524">
    <property type="term" value="F:ATP binding"/>
    <property type="evidence" value="ECO:0007669"/>
    <property type="project" value="UniProtKB-KW"/>
</dbReference>
<dbReference type="GO" id="GO:0000155">
    <property type="term" value="F:phosphorelay sensor kinase activity"/>
    <property type="evidence" value="ECO:0007669"/>
    <property type="project" value="InterPro"/>
</dbReference>
<dbReference type="GO" id="GO:0071555">
    <property type="term" value="P:cell wall organization"/>
    <property type="evidence" value="ECO:0007669"/>
    <property type="project" value="InterPro"/>
</dbReference>
<dbReference type="CDD" id="cd16956">
    <property type="entry name" value="HATPase_YehU-like"/>
    <property type="match status" value="1"/>
</dbReference>
<dbReference type="FunFam" id="3.30.450.40:FF:000013">
    <property type="entry name" value="Sensor histidine kinase YehU"/>
    <property type="match status" value="1"/>
</dbReference>
<dbReference type="Gene3D" id="3.30.450.40">
    <property type="match status" value="1"/>
</dbReference>
<dbReference type="Gene3D" id="3.30.565.10">
    <property type="entry name" value="Histidine kinase-like ATPase, C-terminal domain"/>
    <property type="match status" value="1"/>
</dbReference>
<dbReference type="InterPro" id="IPR050640">
    <property type="entry name" value="Bact_2-comp_sensor_kinase"/>
</dbReference>
<dbReference type="InterPro" id="IPR003018">
    <property type="entry name" value="GAF"/>
</dbReference>
<dbReference type="InterPro" id="IPR029016">
    <property type="entry name" value="GAF-like_dom_sf"/>
</dbReference>
<dbReference type="InterPro" id="IPR036890">
    <property type="entry name" value="HATPase_C_sf"/>
</dbReference>
<dbReference type="InterPro" id="IPR010559">
    <property type="entry name" value="Sig_transdc_His_kin_internal"/>
</dbReference>
<dbReference type="InterPro" id="IPR011620">
    <property type="entry name" value="Sig_transdc_His_kinase_LytS_TM"/>
</dbReference>
<dbReference type="PANTHER" id="PTHR34220:SF10">
    <property type="entry name" value="SENSOR HISTIDINE KINASE BTSS"/>
    <property type="match status" value="1"/>
</dbReference>
<dbReference type="PANTHER" id="PTHR34220">
    <property type="entry name" value="SENSOR HISTIDINE KINASE YPDA"/>
    <property type="match status" value="1"/>
</dbReference>
<dbReference type="Pfam" id="PF07694">
    <property type="entry name" value="5TM-5TMR_LYT"/>
    <property type="match status" value="1"/>
</dbReference>
<dbReference type="Pfam" id="PF13185">
    <property type="entry name" value="GAF_2"/>
    <property type="match status" value="1"/>
</dbReference>
<dbReference type="Pfam" id="PF06580">
    <property type="entry name" value="His_kinase"/>
    <property type="match status" value="1"/>
</dbReference>
<dbReference type="SMART" id="SM00065">
    <property type="entry name" value="GAF"/>
    <property type="match status" value="1"/>
</dbReference>
<dbReference type="SUPFAM" id="SSF55874">
    <property type="entry name" value="ATPase domain of HSP90 chaperone/DNA topoisomerase II/histidine kinase"/>
    <property type="match status" value="1"/>
</dbReference>
<dbReference type="SUPFAM" id="SSF55781">
    <property type="entry name" value="GAF domain-like"/>
    <property type="match status" value="1"/>
</dbReference>
<proteinExistence type="inferred from homology"/>
<sequence>MYDFNLVLLLLQQMCVFLVIAWLMSKTPLFIPLMQVTVRLPHKFLCYIVFSIFCIMGTWFGLHIDDSIANTRAIGAVMGGLLGGPVVGGLVGLTGGLHRYSMGGMTALSCMISTIVEGLLGGLVHSILIRRGRTDKVFNPITAGAVTFVAEMVQMLIILAIARPYEDAVRLVSNIAAPMMVTNTVGAALFMRILLDKRAMFEKYTSAFSATALKVAASTEGILRQGFNEVNSMKVAQVLYQELDIGAVAITDREKLLAFTGIGDDHHLPGKPISSTYTLKAIETGEVVYADGNEVPYRCSLHPQCKLGSTLVIPLRGENQRVMGTIKLYEAKNRLFSSINRTLGEGIAQLLSAQILAGQYERQKAMLTQSEIKLLHAQVNPHFLFNALNTIKAVIRRDSEQASQLVQYLSTFFRKNLKRPSEFVTLADEIEHVNAYLQIEKARFQSRLQVNIAIPQELSQQQLPAFTLQPIVENAIKHGTSQLLDTGRVAISARREGQHLMLEIEDNAGLYQPVTNASGLGMNLVDKRLRERFGDDYGISVACEPDSYTRITLRLPWRDEA</sequence>
<accession>P0AD16</accession>
<accession>P33357</accession>
<accession>P76434</accession>
<name>BTSS_SHIFL</name>